<feature type="signal peptide" evidence="2">
    <location>
        <begin position="1"/>
        <end position="27"/>
    </location>
</feature>
<feature type="chain" id="PRO_0000389520" description="Serine protease inhibitor" evidence="2">
    <location>
        <begin position="28"/>
        <end position="377"/>
    </location>
</feature>
<feature type="region of interest" description="RCL" evidence="2">
    <location>
        <begin position="328"/>
        <end position="349"/>
    </location>
</feature>
<feature type="site" description="Reactive bond for chymotrypsin" evidence="3">
    <location>
        <begin position="342"/>
        <end position="343"/>
    </location>
</feature>
<feature type="glycosylation site" description="N-linked (GlcNAc...) asparagine" evidence="2">
    <location>
        <position position="301"/>
    </location>
</feature>
<feature type="glycosylation site" description="N-linked (GlcNAc...) asparagine" evidence="2">
    <location>
        <position position="361"/>
    </location>
</feature>
<dbReference type="EMBL" id="AY605047">
    <property type="protein sequence ID" value="AAT35220.1"/>
    <property type="molecule type" value="mRNA"/>
</dbReference>
<dbReference type="SMR" id="Q6J201"/>
<dbReference type="GO" id="GO:0005615">
    <property type="term" value="C:extracellular space"/>
    <property type="evidence" value="ECO:0007669"/>
    <property type="project" value="InterPro"/>
</dbReference>
<dbReference type="GO" id="GO:0004867">
    <property type="term" value="F:serine-type endopeptidase inhibitor activity"/>
    <property type="evidence" value="ECO:0000314"/>
    <property type="project" value="UniProtKB"/>
</dbReference>
<dbReference type="CDD" id="cd00172">
    <property type="entry name" value="serpin"/>
    <property type="match status" value="1"/>
</dbReference>
<dbReference type="FunFam" id="2.10.310.10:FF:000001">
    <property type="entry name" value="Serpin family A member 1"/>
    <property type="match status" value="1"/>
</dbReference>
<dbReference type="Gene3D" id="2.30.39.10">
    <property type="entry name" value="Alpha-1-antitrypsin, domain 1"/>
    <property type="match status" value="1"/>
</dbReference>
<dbReference type="Gene3D" id="3.30.497.10">
    <property type="entry name" value="Antithrombin, subunit I, domain 2"/>
    <property type="match status" value="1"/>
</dbReference>
<dbReference type="Gene3D" id="2.10.310.10">
    <property type="entry name" value="Serpins superfamily"/>
    <property type="match status" value="1"/>
</dbReference>
<dbReference type="InterPro" id="IPR023795">
    <property type="entry name" value="Serpin_CS"/>
</dbReference>
<dbReference type="InterPro" id="IPR023796">
    <property type="entry name" value="Serpin_dom"/>
</dbReference>
<dbReference type="InterPro" id="IPR000215">
    <property type="entry name" value="Serpin_fam"/>
</dbReference>
<dbReference type="InterPro" id="IPR036186">
    <property type="entry name" value="Serpin_sf"/>
</dbReference>
<dbReference type="InterPro" id="IPR042178">
    <property type="entry name" value="Serpin_sf_1"/>
</dbReference>
<dbReference type="InterPro" id="IPR042185">
    <property type="entry name" value="Serpin_sf_2"/>
</dbReference>
<dbReference type="PANTHER" id="PTHR11461:SF211">
    <property type="entry name" value="GH10112P-RELATED"/>
    <property type="match status" value="1"/>
</dbReference>
<dbReference type="PANTHER" id="PTHR11461">
    <property type="entry name" value="SERINE PROTEASE INHIBITOR, SERPIN"/>
    <property type="match status" value="1"/>
</dbReference>
<dbReference type="Pfam" id="PF00079">
    <property type="entry name" value="Serpin"/>
    <property type="match status" value="1"/>
</dbReference>
<dbReference type="SMART" id="SM00093">
    <property type="entry name" value="SERPIN"/>
    <property type="match status" value="1"/>
</dbReference>
<dbReference type="SUPFAM" id="SSF56574">
    <property type="entry name" value="Serpins"/>
    <property type="match status" value="1"/>
</dbReference>
<dbReference type="PROSITE" id="PS00284">
    <property type="entry name" value="SERPIN"/>
    <property type="match status" value="1"/>
</dbReference>
<proteinExistence type="evidence at protein level"/>
<keyword id="KW-0325">Glycoprotein</keyword>
<keyword id="KW-0646">Protease inhibitor</keyword>
<keyword id="KW-0722">Serine protease inhibitor</keyword>
<keyword id="KW-0732">Signal</keyword>
<sequence>MAALQAAVSSQLAISFFSSLIVPGAEKNVVCSPLSISSALALVAAGSRGKTLKEIADALNWREDADGLAKALLAEAEKAAQNCDASCPVKTANNVWVDNEFKILDSYRDLLKSFAVNVGKADFKKHSSDETIKINSWIEDHTNKKIRDFFPPGELSEATKAVLVNALYFKGKWAEPFDMESTRDDTFHVSNSKEVQVKMMYHSAELKYFMDENSKCDLVELPYSSKAFSMMLIVPHEVEGLSAVQSSLSLSQVSGWISNVQSAAPQTVDVFLPRFKVSQKVNMKDNLKSLGINDMFSMQANLSGIAGSHDLFVSSAIHQAVIEVNEEGTEAAAATGFGVNFMSMPMQVRADKPFLFLIISNVTKSILFIGKIANPAA</sequence>
<comment type="function">
    <text evidence="3">Inhibitor of serine proteases. Inhibits chymotrypsin, cathepsin G and human neutrophil elastase.</text>
</comment>
<comment type="domain">
    <text evidence="1">The reactive center loop (RCL) extends out from the body of the protein and directs binding to the target protease. The protease cleaves the serpin at the reactive site within the RCL, establishing a covalent linkage between the carboxyl group of the serpin reactive site and the serine hydroxyl of the protease. The resulting inactive serpin-protease complex is highly stable (By similarity).</text>
</comment>
<comment type="miscellaneous">
    <text evidence="3">Possesses several potential secondary cleavage sites.</text>
</comment>
<comment type="similarity">
    <text evidence="2">Belongs to the serpin family.</text>
</comment>
<protein>
    <recommendedName>
        <fullName evidence="6">Serine protease inhibitor</fullName>
    </recommendedName>
    <alternativeName>
        <fullName evidence="4">Jellypin</fullName>
        <shortName evidence="4">JP</shortName>
    </alternativeName>
</protein>
<evidence type="ECO:0000250" key="1">
    <source>
        <dbReference type="UniProtKB" id="P01009"/>
    </source>
</evidence>
<evidence type="ECO:0000255" key="2"/>
<evidence type="ECO:0000269" key="3">
    <source>
    </source>
</evidence>
<evidence type="ECO:0000303" key="4">
    <source>
    </source>
</evidence>
<evidence type="ECO:0000305" key="5"/>
<evidence type="ECO:0000312" key="6">
    <source>
        <dbReference type="EMBL" id="AAT35220.1"/>
    </source>
</evidence>
<organism>
    <name type="scientific">Cyanea capillata</name>
    <name type="common">Lion's mane jellyfish</name>
    <name type="synonym">Cyanea arctica</name>
    <dbReference type="NCBI Taxonomy" id="27804"/>
    <lineage>
        <taxon>Eukaryota</taxon>
        <taxon>Metazoa</taxon>
        <taxon>Cnidaria</taxon>
        <taxon>Scyphozoa</taxon>
        <taxon>Semaeostomeae</taxon>
        <taxon>Cyaneidae</taxon>
        <taxon>Cyanea</taxon>
    </lineage>
</organism>
<accession>Q6J201</accession>
<name>SPI_CYACP</name>
<reference evidence="5 6" key="1">
    <citation type="journal article" date="2004" name="Biochemistry">
        <title>Identification and activity of a lower eukaryotic serine proteinase inhibitor (serpin) from Cyanea capillata: analysis of a jellyfish serpin, jellypin.</title>
        <authorList>
            <person name="Cole E.B."/>
            <person name="Miller D."/>
            <person name="Rometo D."/>
            <person name="Greenberg R.M."/>
            <person name="Bromme D."/>
            <person name="Cataltepe S."/>
            <person name="Pak S.C."/>
            <person name="Mills D.R."/>
            <person name="Silverman G.A."/>
            <person name="Luke C.J."/>
        </authorList>
    </citation>
    <scope>NUCLEOTIDE SEQUENCE [MRNA]</scope>
    <scope>FUNCTION</scope>
    <scope>REACTIVE SITE FOR CHYMOTRYPSIN</scope>
    <scope>IDENTIFICATION BY MASS SPECTROMETRY</scope>
</reference>